<protein>
    <recommendedName>
        <fullName>Uncharacterized protein MJ0351</fullName>
    </recommendedName>
</protein>
<accession>Q57797</accession>
<sequence>MVEKMSPKTFGGEIMENSDIRAKLLEVLESGVVNGKWTIGIVRLNSELRRLLVNRCQCYINDSETTKSKTKIIAEFCMDAAENGVRYSPDLVNAALTILKSMGYNIKDVQCYYDVDFPAVITVDGEVGVVIKPEHMEDLRVVGVKKLTEF</sequence>
<proteinExistence type="predicted"/>
<dbReference type="EMBL" id="L77117">
    <property type="protein sequence ID" value="AAB98340.1"/>
    <property type="molecule type" value="Genomic_DNA"/>
</dbReference>
<dbReference type="PIR" id="G64343">
    <property type="entry name" value="G64343"/>
</dbReference>
<dbReference type="STRING" id="243232.MJ_0351"/>
<dbReference type="PaxDb" id="243232-MJ_0351"/>
<dbReference type="EnsemblBacteria" id="AAB98340">
    <property type="protein sequence ID" value="AAB98340"/>
    <property type="gene ID" value="MJ_0351"/>
</dbReference>
<dbReference type="KEGG" id="mja:MJ_0351"/>
<dbReference type="HOGENOM" id="CLU_1736427_0_0_2"/>
<dbReference type="InParanoid" id="Q57797"/>
<dbReference type="Proteomes" id="UP000000805">
    <property type="component" value="Chromosome"/>
</dbReference>
<organism>
    <name type="scientific">Methanocaldococcus jannaschii (strain ATCC 43067 / DSM 2661 / JAL-1 / JCM 10045 / NBRC 100440)</name>
    <name type="common">Methanococcus jannaschii</name>
    <dbReference type="NCBI Taxonomy" id="243232"/>
    <lineage>
        <taxon>Archaea</taxon>
        <taxon>Methanobacteriati</taxon>
        <taxon>Methanobacteriota</taxon>
        <taxon>Methanomada group</taxon>
        <taxon>Methanococci</taxon>
        <taxon>Methanococcales</taxon>
        <taxon>Methanocaldococcaceae</taxon>
        <taxon>Methanocaldococcus</taxon>
    </lineage>
</organism>
<name>Y351_METJA</name>
<keyword id="KW-1185">Reference proteome</keyword>
<gene>
    <name type="ordered locus">MJ0351</name>
</gene>
<feature type="chain" id="PRO_0000106822" description="Uncharacterized protein MJ0351">
    <location>
        <begin position="1"/>
        <end position="150"/>
    </location>
</feature>
<reference key="1">
    <citation type="journal article" date="1996" name="Science">
        <title>Complete genome sequence of the methanogenic archaeon, Methanococcus jannaschii.</title>
        <authorList>
            <person name="Bult C.J."/>
            <person name="White O."/>
            <person name="Olsen G.J."/>
            <person name="Zhou L."/>
            <person name="Fleischmann R.D."/>
            <person name="Sutton G.G."/>
            <person name="Blake J.A."/>
            <person name="FitzGerald L.M."/>
            <person name="Clayton R.A."/>
            <person name="Gocayne J.D."/>
            <person name="Kerlavage A.R."/>
            <person name="Dougherty B.A."/>
            <person name="Tomb J.-F."/>
            <person name="Adams M.D."/>
            <person name="Reich C.I."/>
            <person name="Overbeek R."/>
            <person name="Kirkness E.F."/>
            <person name="Weinstock K.G."/>
            <person name="Merrick J.M."/>
            <person name="Glodek A."/>
            <person name="Scott J.L."/>
            <person name="Geoghagen N.S.M."/>
            <person name="Weidman J.F."/>
            <person name="Fuhrmann J.L."/>
            <person name="Nguyen D."/>
            <person name="Utterback T.R."/>
            <person name="Kelley J.M."/>
            <person name="Peterson J.D."/>
            <person name="Sadow P.W."/>
            <person name="Hanna M.C."/>
            <person name="Cotton M.D."/>
            <person name="Roberts K.M."/>
            <person name="Hurst M.A."/>
            <person name="Kaine B.P."/>
            <person name="Borodovsky M."/>
            <person name="Klenk H.-P."/>
            <person name="Fraser C.M."/>
            <person name="Smith H.O."/>
            <person name="Woese C.R."/>
            <person name="Venter J.C."/>
        </authorList>
    </citation>
    <scope>NUCLEOTIDE SEQUENCE [LARGE SCALE GENOMIC DNA]</scope>
    <source>
        <strain>ATCC 43067 / DSM 2661 / JAL-1 / JCM 10045 / NBRC 100440</strain>
    </source>
</reference>